<dbReference type="EMBL" id="AF126743">
    <property type="protein sequence ID" value="AAD38506.1"/>
    <property type="molecule type" value="mRNA"/>
</dbReference>
<dbReference type="EMBL" id="AY248898">
    <property type="protein sequence ID" value="AAP20049.1"/>
    <property type="molecule type" value="mRNA"/>
</dbReference>
<dbReference type="EMBL" id="AY512565">
    <property type="protein sequence ID" value="AAS80157.1"/>
    <property type="molecule type" value="mRNA"/>
</dbReference>
<dbReference type="EMBL" id="AK311866">
    <property type="protein sequence ID" value="BAG34807.1"/>
    <property type="molecule type" value="mRNA"/>
</dbReference>
<dbReference type="EMBL" id="AL445217">
    <property type="status" value="NOT_ANNOTATED_CDS"/>
    <property type="molecule type" value="Genomic_DNA"/>
</dbReference>
<dbReference type="EMBL" id="CH471075">
    <property type="protein sequence ID" value="EAX08688.1"/>
    <property type="molecule type" value="Genomic_DNA"/>
</dbReference>
<dbReference type="EMBL" id="BC010910">
    <property type="protein sequence ID" value="AAH10910.1"/>
    <property type="molecule type" value="mRNA"/>
</dbReference>
<dbReference type="EMBL" id="BC095400">
    <property type="protein sequence ID" value="AAH95400.1"/>
    <property type="molecule type" value="mRNA"/>
</dbReference>
<dbReference type="CCDS" id="CCDS9388.1"/>
<dbReference type="RefSeq" id="NP_037370.2">
    <property type="nucleotide sequence ID" value="NM_013238.3"/>
</dbReference>
<dbReference type="SMR" id="Q9Y5T4"/>
<dbReference type="BioGRID" id="118871">
    <property type="interactions" value="166"/>
</dbReference>
<dbReference type="ComplexPortal" id="CPX-6129">
    <property type="entry name" value="TIM23 mitochondrial inner membrane pre-sequence translocase complex, TIM17A variant"/>
</dbReference>
<dbReference type="ComplexPortal" id="CPX-6130">
    <property type="entry name" value="TIM23 mitochondrial inner membrane pre-sequence translocase complex, TIM17B variant"/>
</dbReference>
<dbReference type="FunCoup" id="Q9Y5T4">
    <property type="interactions" value="105"/>
</dbReference>
<dbReference type="IntAct" id="Q9Y5T4">
    <property type="interactions" value="7"/>
</dbReference>
<dbReference type="STRING" id="9606.ENSP00000368523"/>
<dbReference type="GlyGen" id="Q9Y5T4">
    <property type="glycosylation" value="3 sites, 1 O-linked glycan (3 sites)"/>
</dbReference>
<dbReference type="iPTMnet" id="Q9Y5T4"/>
<dbReference type="PhosphoSitePlus" id="Q9Y5T4"/>
<dbReference type="BioMuta" id="DNAJC15"/>
<dbReference type="DMDM" id="110808202"/>
<dbReference type="jPOST" id="Q9Y5T4"/>
<dbReference type="MassIVE" id="Q9Y5T4"/>
<dbReference type="PaxDb" id="9606-ENSP00000368523"/>
<dbReference type="PeptideAtlas" id="Q9Y5T4"/>
<dbReference type="ProteomicsDB" id="86496"/>
<dbReference type="Pumba" id="Q9Y5T4"/>
<dbReference type="Antibodypedia" id="2384">
    <property type="antibodies" value="59 antibodies from 24 providers"/>
</dbReference>
<dbReference type="DNASU" id="29103"/>
<dbReference type="Ensembl" id="ENST00000379221.4">
    <property type="protein sequence ID" value="ENSP00000368523.2"/>
    <property type="gene ID" value="ENSG00000120675.6"/>
</dbReference>
<dbReference type="GeneID" id="29103"/>
<dbReference type="KEGG" id="hsa:29103"/>
<dbReference type="MANE-Select" id="ENST00000379221.4">
    <property type="protein sequence ID" value="ENSP00000368523.2"/>
    <property type="RefSeq nucleotide sequence ID" value="NM_013238.3"/>
    <property type="RefSeq protein sequence ID" value="NP_037370.2"/>
</dbReference>
<dbReference type="UCSC" id="uc001uyy.4">
    <property type="organism name" value="human"/>
</dbReference>
<dbReference type="AGR" id="HGNC:20325"/>
<dbReference type="CTD" id="29103"/>
<dbReference type="DisGeNET" id="29103"/>
<dbReference type="GeneCards" id="DNAJC15"/>
<dbReference type="HGNC" id="HGNC:20325">
    <property type="gene designation" value="DNAJC15"/>
</dbReference>
<dbReference type="HPA" id="ENSG00000120675">
    <property type="expression patterns" value="Low tissue specificity"/>
</dbReference>
<dbReference type="MIM" id="615339">
    <property type="type" value="gene"/>
</dbReference>
<dbReference type="neXtProt" id="NX_Q9Y5T4"/>
<dbReference type="OpenTargets" id="ENSG00000120675"/>
<dbReference type="PharmGKB" id="PA134932264"/>
<dbReference type="VEuPathDB" id="HostDB:ENSG00000120675"/>
<dbReference type="eggNOG" id="KOG0723">
    <property type="taxonomic scope" value="Eukaryota"/>
</dbReference>
<dbReference type="GeneTree" id="ENSGT00940000159907"/>
<dbReference type="HOGENOM" id="CLU_017633_13_3_1"/>
<dbReference type="InParanoid" id="Q9Y5T4"/>
<dbReference type="OMA" id="MRYAEYT"/>
<dbReference type="OrthoDB" id="240298at2759"/>
<dbReference type="PAN-GO" id="Q9Y5T4">
    <property type="GO annotations" value="3 GO annotations based on evolutionary models"/>
</dbReference>
<dbReference type="PhylomeDB" id="Q9Y5T4"/>
<dbReference type="TreeFam" id="TF320584"/>
<dbReference type="PathwayCommons" id="Q9Y5T4"/>
<dbReference type="SignaLink" id="Q9Y5T4"/>
<dbReference type="SIGNOR" id="Q9Y5T4"/>
<dbReference type="BioGRID-ORCS" id="29103">
    <property type="hits" value="14 hits in 1146 CRISPR screens"/>
</dbReference>
<dbReference type="ChiTaRS" id="DNAJC15">
    <property type="organism name" value="human"/>
</dbReference>
<dbReference type="GenomeRNAi" id="29103"/>
<dbReference type="Pharos" id="Q9Y5T4">
    <property type="development level" value="Tbio"/>
</dbReference>
<dbReference type="PRO" id="PR:Q9Y5T4"/>
<dbReference type="Proteomes" id="UP000005640">
    <property type="component" value="Chromosome 13"/>
</dbReference>
<dbReference type="RNAct" id="Q9Y5T4">
    <property type="molecule type" value="protein"/>
</dbReference>
<dbReference type="Bgee" id="ENSG00000120675">
    <property type="expression patterns" value="Expressed in jejunal mucosa and 208 other cell types or tissues"/>
</dbReference>
<dbReference type="GO" id="GO:0005743">
    <property type="term" value="C:mitochondrial inner membrane"/>
    <property type="evidence" value="ECO:0000303"/>
    <property type="project" value="ComplexPortal"/>
</dbReference>
<dbReference type="GO" id="GO:0005739">
    <property type="term" value="C:mitochondrion"/>
    <property type="evidence" value="ECO:0006056"/>
    <property type="project" value="FlyBase"/>
</dbReference>
<dbReference type="GO" id="GO:0001405">
    <property type="term" value="C:PAM complex, Tim23 associated import motor"/>
    <property type="evidence" value="ECO:0000318"/>
    <property type="project" value="GO_Central"/>
</dbReference>
<dbReference type="GO" id="GO:0005744">
    <property type="term" value="C:TIM23 mitochondrial import inner membrane translocase complex"/>
    <property type="evidence" value="ECO:0000303"/>
    <property type="project" value="ComplexPortal"/>
</dbReference>
<dbReference type="GO" id="GO:0001671">
    <property type="term" value="F:ATPase activator activity"/>
    <property type="evidence" value="ECO:0000318"/>
    <property type="project" value="GO_Central"/>
</dbReference>
<dbReference type="GO" id="GO:0009267">
    <property type="term" value="P:cellular response to starvation"/>
    <property type="evidence" value="ECO:0007669"/>
    <property type="project" value="Ensembl"/>
</dbReference>
<dbReference type="GO" id="GO:0006886">
    <property type="term" value="P:intracellular protein transport"/>
    <property type="evidence" value="ECO:0000303"/>
    <property type="project" value="ComplexPortal"/>
</dbReference>
<dbReference type="GO" id="GO:0006120">
    <property type="term" value="P:mitochondrial electron transport, NADH to ubiquinone"/>
    <property type="evidence" value="ECO:0007669"/>
    <property type="project" value="Ensembl"/>
</dbReference>
<dbReference type="GO" id="GO:1902957">
    <property type="term" value="P:negative regulation of mitochondrial electron transport, NADH to ubiquinone"/>
    <property type="evidence" value="ECO:0007669"/>
    <property type="project" value="Ensembl"/>
</dbReference>
<dbReference type="GO" id="GO:0031333">
    <property type="term" value="P:negative regulation of protein-containing complex assembly"/>
    <property type="evidence" value="ECO:0007669"/>
    <property type="project" value="Ensembl"/>
</dbReference>
<dbReference type="GO" id="GO:0030150">
    <property type="term" value="P:protein import into mitochondrial matrix"/>
    <property type="evidence" value="ECO:0000318"/>
    <property type="project" value="GO_Central"/>
</dbReference>
<dbReference type="GO" id="GO:0065003">
    <property type="term" value="P:protein-containing complex assembly"/>
    <property type="evidence" value="ECO:0007669"/>
    <property type="project" value="Ensembl"/>
</dbReference>
<dbReference type="GO" id="GO:0019216">
    <property type="term" value="P:regulation of lipid metabolic process"/>
    <property type="evidence" value="ECO:0007669"/>
    <property type="project" value="Ensembl"/>
</dbReference>
<dbReference type="CDD" id="cd06257">
    <property type="entry name" value="DnaJ"/>
    <property type="match status" value="1"/>
</dbReference>
<dbReference type="FunFam" id="1.10.287.110:FF:000001">
    <property type="entry name" value="Import inner membrane translocase subunit tim14"/>
    <property type="match status" value="1"/>
</dbReference>
<dbReference type="Gene3D" id="1.10.287.110">
    <property type="entry name" value="DnaJ domain"/>
    <property type="match status" value="1"/>
</dbReference>
<dbReference type="InterPro" id="IPR001623">
    <property type="entry name" value="DnaJ_domain"/>
</dbReference>
<dbReference type="InterPro" id="IPR036869">
    <property type="entry name" value="J_dom_sf"/>
</dbReference>
<dbReference type="PANTHER" id="PTHR12763">
    <property type="match status" value="1"/>
</dbReference>
<dbReference type="PANTHER" id="PTHR12763:SF7">
    <property type="entry name" value="DNAJ HOMOLOG SUBFAMILY C MEMBER 15"/>
    <property type="match status" value="1"/>
</dbReference>
<dbReference type="SMART" id="SM00271">
    <property type="entry name" value="DnaJ"/>
    <property type="match status" value="1"/>
</dbReference>
<dbReference type="SUPFAM" id="SSF46565">
    <property type="entry name" value="Chaperone J-domain"/>
    <property type="match status" value="1"/>
</dbReference>
<dbReference type="PROSITE" id="PS50076">
    <property type="entry name" value="DNAJ_2"/>
    <property type="match status" value="1"/>
</dbReference>
<comment type="function">
    <text evidence="1 6">Negative regulator of the mitochondrial respiratory chain. Prevents mitochondrial hyperpolarization state and restricts mitochondrial generation of ATP (By similarity). Acts as an import component of the TIM23 translocase complex. Stimulates the ATPase activity of HSPA9.</text>
</comment>
<comment type="subunit">
    <text evidence="1">Interacts with the TIM23 complex. Directly interacts with PAM16/MAGMAS; this interaction counteracts DNAJC15-dependent stimulation of HSPA9 ATPase activity. Associates with complex I of the mitochondrial electron transfer chain; this interaction may interfere with the formation of supercomplexes that facilitate the transfer of electrons between complexes (By similarity).</text>
</comment>
<comment type="interaction">
    <interactant intactId="EBI-10329228">
        <id>Q9Y5T4</id>
    </interactant>
    <interactant intactId="EBI-10175124">
        <id>Q8IZU0</id>
        <label>FAM9B</label>
    </interactant>
    <organismsDiffer>false</organismsDiffer>
    <experiments>3</experiments>
</comment>
<comment type="interaction">
    <interactant intactId="EBI-10329228">
        <id>Q9Y5T4</id>
    </interactant>
    <interactant intactId="EBI-721147">
        <id>Q9Y3D7</id>
        <label>PAM16</label>
    </interactant>
    <organismsDiffer>false</organismsDiffer>
    <experiments>6</experiments>
</comment>
<comment type="interaction">
    <interactant intactId="EBI-10329228">
        <id>Q9Y5T4</id>
    </interactant>
    <interactant intactId="EBI-747107">
        <id>Q8IUQ4</id>
        <label>SIAH1</label>
    </interactant>
    <organismsDiffer>false</organismsDiffer>
    <experiments>3</experiments>
</comment>
<comment type="subcellular location">
    <subcellularLocation>
        <location evidence="6 7">Mitochondrion inner membrane</location>
        <topology evidence="6 7">Single-pass membrane protein</topology>
    </subcellularLocation>
</comment>
<comment type="tissue specificity">
    <text evidence="4 7">Expressed at highest levels in heart, followed by liver and kidney.</text>
</comment>
<comment type="disease">
    <text evidence="4">Absent or down-regulated in many advanced cases of ovarian adenocarcinoma, due to hypermethylation and allelic loss. Loss of expression correlates with increased resistance to antineoplastic drugs, such as cisplatin.</text>
</comment>
<proteinExistence type="evidence at protein level"/>
<sequence>MAARGVIAPVGESLRYAEYLQPSAKRPDADVDQQRLVRSLIAVGLGVAALAFAGRYAFRIWKPLEQVITETAKKISTPSFSSYYKGGFEQKMSRREAGLILGVSPSAGKAKIRTAHRRVMILNHPDKGGSPYVAAKINEAKDLLETTTKH</sequence>
<feature type="chain" id="PRO_0000247139" description="DnaJ homolog subfamily C member 15">
    <location>
        <begin position="1"/>
        <end position="150"/>
    </location>
</feature>
<feature type="topological domain" description="Mitochondrial intermembrane" evidence="2">
    <location>
        <begin position="1"/>
        <end position="35"/>
    </location>
</feature>
<feature type="transmembrane region" description="Helical" evidence="2">
    <location>
        <begin position="36"/>
        <end position="58"/>
    </location>
</feature>
<feature type="topological domain" description="Mitochondrial matrix" evidence="2">
    <location>
        <begin position="59"/>
        <end position="150"/>
    </location>
</feature>
<feature type="domain" description="J" evidence="3">
    <location>
        <begin position="96"/>
        <end position="150"/>
    </location>
</feature>
<feature type="modified residue" description="Phosphoserine" evidence="9">
    <location>
        <position position="104"/>
    </location>
</feature>
<feature type="sequence variant" id="VAR_027077" description="In dbSNP:rs12015." evidence="4 5">
    <original>R</original>
    <variation>G</variation>
    <location>
        <position position="35"/>
    </location>
</feature>
<feature type="sequence conflict" description="In Ref. 2; AAP20049." evidence="8" ref="2">
    <original>Q</original>
    <variation>R</variation>
    <location>
        <position position="34"/>
    </location>
</feature>
<feature type="sequence conflict" description="In Ref. 2; AAP20049." evidence="8" ref="2">
    <original>P</original>
    <variation>S</variation>
    <location>
        <position position="131"/>
    </location>
</feature>
<gene>
    <name type="primary">DNAJC15</name>
    <name type="synonym">DNAJD1</name>
    <name type="ORF">GIG22</name>
    <name type="ORF">HSD18</name>
</gene>
<name>DJC15_HUMAN</name>
<reference key="1">
    <citation type="journal article" date="2001" name="Cancer Res.">
        <title>Loss of expression of a new member of the DNAJ protein family confers resistance to chemotherapeutic agents used in the treatment of ovarian cancer.</title>
        <authorList>
            <person name="Shridhar V."/>
            <person name="Bible K.C."/>
            <person name="Staub J."/>
            <person name="Avula R."/>
            <person name="Lee Y.K."/>
            <person name="Kalli K."/>
            <person name="Huang H."/>
            <person name="Hartmann L.C."/>
            <person name="Kaufmann S.H."/>
            <person name="Smith D.I."/>
        </authorList>
    </citation>
    <scope>NUCLEOTIDE SEQUENCE [MRNA]</scope>
    <scope>TISSUE SPECIFICITY</scope>
    <scope>INVOLVEMENT IN OVARIAN ADENOCARCINOMA</scope>
    <scope>VARIANT GLY-35</scope>
</reference>
<reference key="2">
    <citation type="submission" date="2003-03" db="EMBL/GenBank/DDBJ databases">
        <title>A new spermatogenesis-related gene.</title>
        <authorList>
            <person name="Yang C.B."/>
            <person name="Miao S.Y."/>
            <person name="Zhang X.D."/>
            <person name="Qiao Y."/>
            <person name="Liang G."/>
            <person name="Wang L.F."/>
        </authorList>
    </citation>
    <scope>NUCLEOTIDE SEQUENCE [MRNA]</scope>
    <source>
        <tissue>Testis</tissue>
    </source>
</reference>
<reference key="3">
    <citation type="submission" date="2003-12" db="EMBL/GenBank/DDBJ databases">
        <title>Identification of a cell growth inhibiting gene.</title>
        <authorList>
            <person name="Kim J.W."/>
        </authorList>
    </citation>
    <scope>NUCLEOTIDE SEQUENCE [LARGE SCALE MRNA]</scope>
</reference>
<reference key="4">
    <citation type="journal article" date="2004" name="Nat. Genet.">
        <title>Complete sequencing and characterization of 21,243 full-length human cDNAs.</title>
        <authorList>
            <person name="Ota T."/>
            <person name="Suzuki Y."/>
            <person name="Nishikawa T."/>
            <person name="Otsuki T."/>
            <person name="Sugiyama T."/>
            <person name="Irie R."/>
            <person name="Wakamatsu A."/>
            <person name="Hayashi K."/>
            <person name="Sato H."/>
            <person name="Nagai K."/>
            <person name="Kimura K."/>
            <person name="Makita H."/>
            <person name="Sekine M."/>
            <person name="Obayashi M."/>
            <person name="Nishi T."/>
            <person name="Shibahara T."/>
            <person name="Tanaka T."/>
            <person name="Ishii S."/>
            <person name="Yamamoto J."/>
            <person name="Saito K."/>
            <person name="Kawai Y."/>
            <person name="Isono Y."/>
            <person name="Nakamura Y."/>
            <person name="Nagahari K."/>
            <person name="Murakami K."/>
            <person name="Yasuda T."/>
            <person name="Iwayanagi T."/>
            <person name="Wagatsuma M."/>
            <person name="Shiratori A."/>
            <person name="Sudo H."/>
            <person name="Hosoiri T."/>
            <person name="Kaku Y."/>
            <person name="Kodaira H."/>
            <person name="Kondo H."/>
            <person name="Sugawara M."/>
            <person name="Takahashi M."/>
            <person name="Kanda K."/>
            <person name="Yokoi T."/>
            <person name="Furuya T."/>
            <person name="Kikkawa E."/>
            <person name="Omura Y."/>
            <person name="Abe K."/>
            <person name="Kamihara K."/>
            <person name="Katsuta N."/>
            <person name="Sato K."/>
            <person name="Tanikawa M."/>
            <person name="Yamazaki M."/>
            <person name="Ninomiya K."/>
            <person name="Ishibashi T."/>
            <person name="Yamashita H."/>
            <person name="Murakawa K."/>
            <person name="Fujimori K."/>
            <person name="Tanai H."/>
            <person name="Kimata M."/>
            <person name="Watanabe M."/>
            <person name="Hiraoka S."/>
            <person name="Chiba Y."/>
            <person name="Ishida S."/>
            <person name="Ono Y."/>
            <person name="Takiguchi S."/>
            <person name="Watanabe S."/>
            <person name="Yosida M."/>
            <person name="Hotuta T."/>
            <person name="Kusano J."/>
            <person name="Kanehori K."/>
            <person name="Takahashi-Fujii A."/>
            <person name="Hara H."/>
            <person name="Tanase T.-O."/>
            <person name="Nomura Y."/>
            <person name="Togiya S."/>
            <person name="Komai F."/>
            <person name="Hara R."/>
            <person name="Takeuchi K."/>
            <person name="Arita M."/>
            <person name="Imose N."/>
            <person name="Musashino K."/>
            <person name="Yuuki H."/>
            <person name="Oshima A."/>
            <person name="Sasaki N."/>
            <person name="Aotsuka S."/>
            <person name="Yoshikawa Y."/>
            <person name="Matsunawa H."/>
            <person name="Ichihara T."/>
            <person name="Shiohata N."/>
            <person name="Sano S."/>
            <person name="Moriya S."/>
            <person name="Momiyama H."/>
            <person name="Satoh N."/>
            <person name="Takami S."/>
            <person name="Terashima Y."/>
            <person name="Suzuki O."/>
            <person name="Nakagawa S."/>
            <person name="Senoh A."/>
            <person name="Mizoguchi H."/>
            <person name="Goto Y."/>
            <person name="Shimizu F."/>
            <person name="Wakebe H."/>
            <person name="Hishigaki H."/>
            <person name="Watanabe T."/>
            <person name="Sugiyama A."/>
            <person name="Takemoto M."/>
            <person name="Kawakami B."/>
            <person name="Yamazaki M."/>
            <person name="Watanabe K."/>
            <person name="Kumagai A."/>
            <person name="Itakura S."/>
            <person name="Fukuzumi Y."/>
            <person name="Fujimori Y."/>
            <person name="Komiyama M."/>
            <person name="Tashiro H."/>
            <person name="Tanigami A."/>
            <person name="Fujiwara T."/>
            <person name="Ono T."/>
            <person name="Yamada K."/>
            <person name="Fujii Y."/>
            <person name="Ozaki K."/>
            <person name="Hirao M."/>
            <person name="Ohmori Y."/>
            <person name="Kawabata A."/>
            <person name="Hikiji T."/>
            <person name="Kobatake N."/>
            <person name="Inagaki H."/>
            <person name="Ikema Y."/>
            <person name="Okamoto S."/>
            <person name="Okitani R."/>
            <person name="Kawakami T."/>
            <person name="Noguchi S."/>
            <person name="Itoh T."/>
            <person name="Shigeta K."/>
            <person name="Senba T."/>
            <person name="Matsumura K."/>
            <person name="Nakajima Y."/>
            <person name="Mizuno T."/>
            <person name="Morinaga M."/>
            <person name="Sasaki M."/>
            <person name="Togashi T."/>
            <person name="Oyama M."/>
            <person name="Hata H."/>
            <person name="Watanabe M."/>
            <person name="Komatsu T."/>
            <person name="Mizushima-Sugano J."/>
            <person name="Satoh T."/>
            <person name="Shirai Y."/>
            <person name="Takahashi Y."/>
            <person name="Nakagawa K."/>
            <person name="Okumura K."/>
            <person name="Nagase T."/>
            <person name="Nomura N."/>
            <person name="Kikuchi H."/>
            <person name="Masuho Y."/>
            <person name="Yamashita R."/>
            <person name="Nakai K."/>
            <person name="Yada T."/>
            <person name="Nakamura Y."/>
            <person name="Ohara O."/>
            <person name="Isogai T."/>
            <person name="Sugano S."/>
        </authorList>
    </citation>
    <scope>NUCLEOTIDE SEQUENCE [LARGE SCALE MRNA]</scope>
    <source>
        <tissue>Brain</tissue>
    </source>
</reference>
<reference key="5">
    <citation type="journal article" date="2004" name="Nature">
        <title>The DNA sequence and analysis of human chromosome 13.</title>
        <authorList>
            <person name="Dunham A."/>
            <person name="Matthews L.H."/>
            <person name="Burton J."/>
            <person name="Ashurst J.L."/>
            <person name="Howe K.L."/>
            <person name="Ashcroft K.J."/>
            <person name="Beare D.M."/>
            <person name="Burford D.C."/>
            <person name="Hunt S.E."/>
            <person name="Griffiths-Jones S."/>
            <person name="Jones M.C."/>
            <person name="Keenan S.J."/>
            <person name="Oliver K."/>
            <person name="Scott C.E."/>
            <person name="Ainscough R."/>
            <person name="Almeida J.P."/>
            <person name="Ambrose K.D."/>
            <person name="Andrews D.T."/>
            <person name="Ashwell R.I.S."/>
            <person name="Babbage A.K."/>
            <person name="Bagguley C.L."/>
            <person name="Bailey J."/>
            <person name="Bannerjee R."/>
            <person name="Barlow K.F."/>
            <person name="Bates K."/>
            <person name="Beasley H."/>
            <person name="Bird C.P."/>
            <person name="Bray-Allen S."/>
            <person name="Brown A.J."/>
            <person name="Brown J.Y."/>
            <person name="Burrill W."/>
            <person name="Carder C."/>
            <person name="Carter N.P."/>
            <person name="Chapman J.C."/>
            <person name="Clamp M.E."/>
            <person name="Clark S.Y."/>
            <person name="Clarke G."/>
            <person name="Clee C.M."/>
            <person name="Clegg S.C."/>
            <person name="Cobley V."/>
            <person name="Collins J.E."/>
            <person name="Corby N."/>
            <person name="Coville G.J."/>
            <person name="Deloukas P."/>
            <person name="Dhami P."/>
            <person name="Dunham I."/>
            <person name="Dunn M."/>
            <person name="Earthrowl M.E."/>
            <person name="Ellington A.G."/>
            <person name="Faulkner L."/>
            <person name="Frankish A.G."/>
            <person name="Frankland J."/>
            <person name="French L."/>
            <person name="Garner P."/>
            <person name="Garnett J."/>
            <person name="Gilbert J.G.R."/>
            <person name="Gilson C.J."/>
            <person name="Ghori J."/>
            <person name="Grafham D.V."/>
            <person name="Gribble S.M."/>
            <person name="Griffiths C."/>
            <person name="Hall R.E."/>
            <person name="Hammond S."/>
            <person name="Harley J.L."/>
            <person name="Hart E.A."/>
            <person name="Heath P.D."/>
            <person name="Howden P.J."/>
            <person name="Huckle E.J."/>
            <person name="Hunt P.J."/>
            <person name="Hunt A.R."/>
            <person name="Johnson C."/>
            <person name="Johnson D."/>
            <person name="Kay M."/>
            <person name="Kimberley A.M."/>
            <person name="King A."/>
            <person name="Laird G.K."/>
            <person name="Langford C.J."/>
            <person name="Lawlor S."/>
            <person name="Leongamornlert D.A."/>
            <person name="Lloyd D.M."/>
            <person name="Lloyd C."/>
            <person name="Loveland J.E."/>
            <person name="Lovell J."/>
            <person name="Martin S."/>
            <person name="Mashreghi-Mohammadi M."/>
            <person name="McLaren S.J."/>
            <person name="McMurray A."/>
            <person name="Milne S."/>
            <person name="Moore M.J.F."/>
            <person name="Nickerson T."/>
            <person name="Palmer S.A."/>
            <person name="Pearce A.V."/>
            <person name="Peck A.I."/>
            <person name="Pelan S."/>
            <person name="Phillimore B."/>
            <person name="Porter K.M."/>
            <person name="Rice C.M."/>
            <person name="Searle S."/>
            <person name="Sehra H.K."/>
            <person name="Shownkeen R."/>
            <person name="Skuce C.D."/>
            <person name="Smith M."/>
            <person name="Steward C.A."/>
            <person name="Sycamore N."/>
            <person name="Tester J."/>
            <person name="Thomas D.W."/>
            <person name="Tracey A."/>
            <person name="Tromans A."/>
            <person name="Tubby B."/>
            <person name="Wall M."/>
            <person name="Wallis J.M."/>
            <person name="West A.P."/>
            <person name="Whitehead S.L."/>
            <person name="Willey D.L."/>
            <person name="Wilming L."/>
            <person name="Wray P.W."/>
            <person name="Wright M.W."/>
            <person name="Young L."/>
            <person name="Coulson A."/>
            <person name="Durbin R.M."/>
            <person name="Hubbard T."/>
            <person name="Sulston J.E."/>
            <person name="Beck S."/>
            <person name="Bentley D.R."/>
            <person name="Rogers J."/>
            <person name="Ross M.T."/>
        </authorList>
    </citation>
    <scope>NUCLEOTIDE SEQUENCE [LARGE SCALE GENOMIC DNA]</scope>
</reference>
<reference key="6">
    <citation type="submission" date="2005-07" db="EMBL/GenBank/DDBJ databases">
        <authorList>
            <person name="Mural R.J."/>
            <person name="Istrail S."/>
            <person name="Sutton G.G."/>
            <person name="Florea L."/>
            <person name="Halpern A.L."/>
            <person name="Mobarry C.M."/>
            <person name="Lippert R."/>
            <person name="Walenz B."/>
            <person name="Shatkay H."/>
            <person name="Dew I."/>
            <person name="Miller J.R."/>
            <person name="Flanigan M.J."/>
            <person name="Edwards N.J."/>
            <person name="Bolanos R."/>
            <person name="Fasulo D."/>
            <person name="Halldorsson B.V."/>
            <person name="Hannenhalli S."/>
            <person name="Turner R."/>
            <person name="Yooseph S."/>
            <person name="Lu F."/>
            <person name="Nusskern D.R."/>
            <person name="Shue B.C."/>
            <person name="Zheng X.H."/>
            <person name="Zhong F."/>
            <person name="Delcher A.L."/>
            <person name="Huson D.H."/>
            <person name="Kravitz S.A."/>
            <person name="Mouchard L."/>
            <person name="Reinert K."/>
            <person name="Remington K.A."/>
            <person name="Clark A.G."/>
            <person name="Waterman M.S."/>
            <person name="Eichler E.E."/>
            <person name="Adams M.D."/>
            <person name="Hunkapiller M.W."/>
            <person name="Myers E.W."/>
            <person name="Venter J.C."/>
        </authorList>
    </citation>
    <scope>NUCLEOTIDE SEQUENCE [LARGE SCALE GENOMIC DNA]</scope>
</reference>
<reference key="7">
    <citation type="journal article" date="2004" name="Genome Res.">
        <title>The status, quality, and expansion of the NIH full-length cDNA project: the Mammalian Gene Collection (MGC).</title>
        <authorList>
            <consortium name="The MGC Project Team"/>
        </authorList>
    </citation>
    <scope>NUCLEOTIDE SEQUENCE [LARGE SCALE MRNA]</scope>
    <scope>VARIANT GLY-35</scope>
    <source>
        <tissue>Skin</tissue>
    </source>
</reference>
<reference key="8">
    <citation type="journal article" date="2008" name="Proc. Natl. Acad. Sci. U.S.A.">
        <title>A quantitative atlas of mitotic phosphorylation.</title>
        <authorList>
            <person name="Dephoure N."/>
            <person name="Zhou C."/>
            <person name="Villen J."/>
            <person name="Beausoleil S.A."/>
            <person name="Bakalarski C.E."/>
            <person name="Elledge S.J."/>
            <person name="Gygi S.P."/>
        </authorList>
    </citation>
    <scope>PHOSPHORYLATION [LARGE SCALE ANALYSIS] AT SER-104</scope>
    <scope>IDENTIFICATION BY MASS SPECTROMETRY [LARGE SCALE ANALYSIS]</scope>
    <source>
        <tissue>Cervix carcinoma</tissue>
    </source>
</reference>
<reference key="9">
    <citation type="journal article" date="2011" name="BMC Syst. Biol.">
        <title>Initial characterization of the human central proteome.</title>
        <authorList>
            <person name="Burkard T.R."/>
            <person name="Planyavsky M."/>
            <person name="Kaupe I."/>
            <person name="Breitwieser F.P."/>
            <person name="Buerckstuemmer T."/>
            <person name="Bennett K.L."/>
            <person name="Superti-Furga G."/>
            <person name="Colinge J."/>
        </authorList>
    </citation>
    <scope>IDENTIFICATION BY MASS SPECTROMETRY [LARGE SCALE ANALYSIS]</scope>
</reference>
<reference key="10">
    <citation type="journal article" date="2013" name="Hum. Mol. Genet.">
        <title>Methylation-controlled J-protein MCJ acts in the import of proteins into human mitochondria.</title>
        <authorList>
            <person name="Schusdziarra C."/>
            <person name="Blamowska M."/>
            <person name="Azem A."/>
            <person name="Hell K."/>
        </authorList>
    </citation>
    <scope>FUNCTION</scope>
    <scope>INTERACTION WITH PAM16</scope>
    <scope>ASSOCIATION WITH THE TIM23 COMPLEX</scope>
    <scope>SUBCELLULAR LOCATION</scope>
    <scope>TOPOLOGY</scope>
</reference>
<reference key="11">
    <citation type="journal article" date="2013" name="Mol. Cell. Biol.">
        <title>MCJ/DnaJC15, an endogenous mitochondrial repressor of the respiratory chain that controls metabolic alterations.</title>
        <authorList>
            <person name="Hatle K.M."/>
            <person name="Gummadidala P."/>
            <person name="Navasa N."/>
            <person name="Bernardo E."/>
            <person name="Dodge J."/>
            <person name="Silverstrim B."/>
            <person name="Fortner K."/>
            <person name="Burg E."/>
            <person name="Suratt B.T."/>
            <person name="Hammer J."/>
            <person name="Radermacher M."/>
            <person name="Taatjes D.J."/>
            <person name="Thornton T."/>
            <person name="Anguita J."/>
            <person name="Rincon M."/>
        </authorList>
    </citation>
    <scope>SUBCELLULAR LOCATION</scope>
    <scope>TISSUE SPECIFICITY</scope>
</reference>
<evidence type="ECO:0000250" key="1"/>
<evidence type="ECO:0000255" key="2"/>
<evidence type="ECO:0000255" key="3">
    <source>
        <dbReference type="PROSITE-ProRule" id="PRU00286"/>
    </source>
</evidence>
<evidence type="ECO:0000269" key="4">
    <source>
    </source>
</evidence>
<evidence type="ECO:0000269" key="5">
    <source>
    </source>
</evidence>
<evidence type="ECO:0000269" key="6">
    <source>
    </source>
</evidence>
<evidence type="ECO:0000269" key="7">
    <source>
    </source>
</evidence>
<evidence type="ECO:0000305" key="8"/>
<evidence type="ECO:0007744" key="9">
    <source>
    </source>
</evidence>
<keyword id="KW-0143">Chaperone</keyword>
<keyword id="KW-0472">Membrane</keyword>
<keyword id="KW-0496">Mitochondrion</keyword>
<keyword id="KW-0999">Mitochondrion inner membrane</keyword>
<keyword id="KW-0597">Phosphoprotein</keyword>
<keyword id="KW-0653">Protein transport</keyword>
<keyword id="KW-1267">Proteomics identification</keyword>
<keyword id="KW-1185">Reference proteome</keyword>
<keyword id="KW-0811">Translocation</keyword>
<keyword id="KW-0812">Transmembrane</keyword>
<keyword id="KW-1133">Transmembrane helix</keyword>
<keyword id="KW-0813">Transport</keyword>
<protein>
    <recommendedName>
        <fullName>DnaJ homolog subfamily C member 15</fullName>
    </recommendedName>
    <alternativeName>
        <fullName>Cell growth-inhibiting gene 22 protein</fullName>
    </alternativeName>
    <alternativeName>
        <fullName>Methylation-controlled J protein</fullName>
        <shortName>MCJ</shortName>
    </alternativeName>
</protein>
<accession>Q9Y5T4</accession>
<accession>B2R4L0</accession>
<accession>Q5T219</accession>
<accession>Q6X963</accession>
<organism>
    <name type="scientific">Homo sapiens</name>
    <name type="common">Human</name>
    <dbReference type="NCBI Taxonomy" id="9606"/>
    <lineage>
        <taxon>Eukaryota</taxon>
        <taxon>Metazoa</taxon>
        <taxon>Chordata</taxon>
        <taxon>Craniata</taxon>
        <taxon>Vertebrata</taxon>
        <taxon>Euteleostomi</taxon>
        <taxon>Mammalia</taxon>
        <taxon>Eutheria</taxon>
        <taxon>Euarchontoglires</taxon>
        <taxon>Primates</taxon>
        <taxon>Haplorrhini</taxon>
        <taxon>Catarrhini</taxon>
        <taxon>Hominidae</taxon>
        <taxon>Homo</taxon>
    </lineage>
</organism>